<comment type="function">
    <text evidence="1">Involved in the secretion of the Ipa antigens. Involved in the intracellular dissemination of Shigella. Part of the Mxi-Spa secretion apparatus (By similarity).</text>
</comment>
<comment type="subcellular location">
    <subcellularLocation>
        <location evidence="1">Cell inner membrane</location>
        <topology evidence="1">Single-pass type II membrane protein</topology>
    </subcellularLocation>
    <subcellularLocation>
        <location evidence="1">Cell outer membrane</location>
        <topology evidence="1">Single-pass type II membrane protein</topology>
    </subcellularLocation>
</comment>
<feature type="chain" id="PRO_0000096658" description="Protein MxiG">
    <location>
        <begin position="1"/>
        <end position="371"/>
    </location>
</feature>
<feature type="transmembrane region" description="Helical" evidence="2">
    <location>
        <begin position="127"/>
        <end position="141"/>
    </location>
</feature>
<proteinExistence type="inferred from homology"/>
<accession>P0A222</accession>
<accession>Q57332</accession>
<name>MXIG_SHISO</name>
<protein>
    <recommendedName>
        <fullName>Protein MxiG</fullName>
    </recommendedName>
</protein>
<dbReference type="EMBL" id="D50601">
    <property type="protein sequence ID" value="BAA09145.1"/>
    <property type="molecule type" value="Genomic_DNA"/>
</dbReference>
<dbReference type="RefSeq" id="WP_001287353.1">
    <property type="nucleotide sequence ID" value="NZ_WHSK01000208.1"/>
</dbReference>
<dbReference type="BMRB" id="P0A222"/>
<dbReference type="SMR" id="P0A222"/>
<dbReference type="STRING" id="216599.GCA_000283715_05227"/>
<dbReference type="OMA" id="EMEWAKE"/>
<dbReference type="GO" id="GO:0009279">
    <property type="term" value="C:cell outer membrane"/>
    <property type="evidence" value="ECO:0007669"/>
    <property type="project" value="UniProtKB-SubCell"/>
</dbReference>
<dbReference type="GO" id="GO:0005886">
    <property type="term" value="C:plasma membrane"/>
    <property type="evidence" value="ECO:0007669"/>
    <property type="project" value="UniProtKB-SubCell"/>
</dbReference>
<dbReference type="Gene3D" id="2.60.200.50">
    <property type="match status" value="1"/>
</dbReference>
<dbReference type="Gene3D" id="3.30.300.170">
    <property type="match status" value="1"/>
</dbReference>
<dbReference type="Gene3D" id="3.30.70.1770">
    <property type="match status" value="1"/>
</dbReference>
<dbReference type="InterPro" id="IPR019029">
    <property type="entry name" value="T3SS_PrgH/EprH-like"/>
</dbReference>
<dbReference type="Pfam" id="PF09480">
    <property type="entry name" value="PrgH"/>
    <property type="match status" value="1"/>
</dbReference>
<evidence type="ECO:0000250" key="1"/>
<evidence type="ECO:0000255" key="2"/>
<sequence length="371" mass="43002">MSEAKNSNLAPFRLLVKLTNGVGDEFPLYYGNNLIVLGRTIETLEFGNDNFPENIIPVTDSKSDGIIYLTISKDNICQFSDEKGEQIDINSQFNSFEYDGISFHLKNMREDKSRGHILNGMYKNHSVFFFFAVIVVLIIIFSLSLKKDEVKEIAEIIDDKRYGIVNTGQCNYILAETQNDAVWASVALNKTGFTKCRYILVSNKEINRIQQYINQRFPFINLYVLNLVSDKAELLVFLSKERNSSKDTELDKLKNALIVEFPYIKNIKFNYLSDHNARGDAKGIFTKVNVQYKEICENNKVTYSVREELTDEKLELINRLISEHKNIYGDQYIEFSVLLIDDDFKGKSYLNSKDSYVMLNDKHWFFLDKNK</sequence>
<geneLocation type="plasmid">
    <name>pINV</name>
</geneLocation>
<organism>
    <name type="scientific">Shigella sonnei</name>
    <dbReference type="NCBI Taxonomy" id="624"/>
    <lineage>
        <taxon>Bacteria</taxon>
        <taxon>Pseudomonadati</taxon>
        <taxon>Pseudomonadota</taxon>
        <taxon>Gammaproteobacteria</taxon>
        <taxon>Enterobacterales</taxon>
        <taxon>Enterobacteriaceae</taxon>
        <taxon>Shigella</taxon>
    </lineage>
</organism>
<keyword id="KW-0997">Cell inner membrane</keyword>
<keyword id="KW-1003">Cell membrane</keyword>
<keyword id="KW-0998">Cell outer membrane</keyword>
<keyword id="KW-0472">Membrane</keyword>
<keyword id="KW-0614">Plasmid</keyword>
<keyword id="KW-0812">Transmembrane</keyword>
<keyword id="KW-1133">Transmembrane helix</keyword>
<keyword id="KW-0843">Virulence</keyword>
<gene>
    <name type="primary">mxiG</name>
</gene>
<reference key="1">
    <citation type="submission" date="1995-05" db="EMBL/GenBank/DDBJ databases">
        <title>Comparison and high conservation of nucleotide sequences of spa-mxi regions between S.sonnei and S.flexneri -- identification of a new gene coding plausible membrane protein.</title>
        <authorList>
            <person name="Arakawa E."/>
            <person name="Kato J."/>
            <person name="Ito K."/>
            <person name="Watanabe H."/>
        </authorList>
    </citation>
    <scope>NUCLEOTIDE SEQUENCE [GENOMIC DNA]</scope>
    <source>
        <strain>HW383</strain>
    </source>
</reference>